<name>JZ67B_CHIGU</name>
<organism>
    <name type="scientific">Chilobrachys guangxiensis</name>
    <name type="common">Chinese earth tiger tarantula</name>
    <name type="synonym">Chilobrachys jingzhao</name>
    <dbReference type="NCBI Taxonomy" id="278060"/>
    <lineage>
        <taxon>Eukaryota</taxon>
        <taxon>Metazoa</taxon>
        <taxon>Ecdysozoa</taxon>
        <taxon>Arthropoda</taxon>
        <taxon>Chelicerata</taxon>
        <taxon>Arachnida</taxon>
        <taxon>Araneae</taxon>
        <taxon>Mygalomorphae</taxon>
        <taxon>Theraphosidae</taxon>
        <taxon>Chilobrachys</taxon>
    </lineage>
</organism>
<feature type="signal peptide" evidence="2">
    <location>
        <begin position="1"/>
        <end position="19"/>
    </location>
</feature>
<feature type="chain" id="PRO_0000398550" description="U37-theraphotoxin-Cg1a">
    <location>
        <begin position="20"/>
        <end position="50"/>
    </location>
</feature>
<keyword id="KW-0964">Secreted</keyword>
<keyword id="KW-0732">Signal</keyword>
<keyword id="KW-0800">Toxin</keyword>
<comment type="subcellular location">
    <subcellularLocation>
        <location evidence="1">Secreted</location>
    </subcellularLocation>
</comment>
<comment type="tissue specificity">
    <text>Expressed by the venom gland.</text>
</comment>
<comment type="similarity">
    <text evidence="3">Belongs to the neurotoxin 10 (Hwtx-1) family. 67 (Jztx-67) subfamily.</text>
</comment>
<comment type="caution">
    <text evidence="3">Lacks the C-terminal part containing the 'disulfide through disulfide knot' structure.</text>
</comment>
<accession>B1P1I7</accession>
<protein>
    <recommendedName>
        <fullName>U37-theraphotoxin-Cg1a</fullName>
        <shortName>U37-TRTX-Cg1a</shortName>
    </recommendedName>
    <alternativeName>
        <fullName evidence="4">Jingzhaotoxin-like peptide JZTX-67.2</fullName>
        <shortName evidence="4">JZTX-67.2</shortName>
    </alternativeName>
</protein>
<proteinExistence type="evidence at transcript level"/>
<evidence type="ECO:0000250" key="1"/>
<evidence type="ECO:0000255" key="2"/>
<evidence type="ECO:0000305" key="3"/>
<evidence type="ECO:0000312" key="4">
    <source>
        <dbReference type="EMBL" id="ABY71737.1"/>
    </source>
</evidence>
<dbReference type="EMBL" id="EU233918">
    <property type="protein sequence ID" value="ABY71737.1"/>
    <property type="molecule type" value="mRNA"/>
</dbReference>
<dbReference type="ArachnoServer" id="AS000866">
    <property type="toxin name" value="U37-theraphotoxin-Cg1a"/>
</dbReference>
<dbReference type="GO" id="GO:0005576">
    <property type="term" value="C:extracellular region"/>
    <property type="evidence" value="ECO:0007669"/>
    <property type="project" value="UniProtKB-SubCell"/>
</dbReference>
<dbReference type="GO" id="GO:0090729">
    <property type="term" value="F:toxin activity"/>
    <property type="evidence" value="ECO:0007669"/>
    <property type="project" value="UniProtKB-KW"/>
</dbReference>
<sequence length="50" mass="5596">MRVLLIIAGLALLSVVCYTSEMKEQNSLNEVLSAFFDVEEPQEKGCIICF</sequence>
<reference key="1">
    <citation type="journal article" date="2008" name="Cell. Mol. Life Sci.">
        <title>Molecular diversity and evolution of cystine knot toxins of the tarantula Chilobrachys jingzhao.</title>
        <authorList>
            <person name="Chen J."/>
            <person name="Deng M."/>
            <person name="He Q."/>
            <person name="Meng E."/>
            <person name="Jiang L."/>
            <person name="Liao Z."/>
            <person name="Rong M."/>
            <person name="Liang S."/>
        </authorList>
    </citation>
    <scope>NUCLEOTIDE SEQUENCE [LARGE SCALE MRNA]</scope>
    <source>
        <tissue>Venom gland</tissue>
    </source>
</reference>